<feature type="chain" id="PRO_0000149257" description="CMP-N-acetylneuraminate-beta-galactosamide-alpha-2,3-sialyltransferase 1">
    <location>
        <begin position="1"/>
        <end position="342"/>
    </location>
</feature>
<feature type="topological domain" description="Cytoplasmic" evidence="3">
    <location>
        <begin position="1"/>
        <end position="10"/>
    </location>
</feature>
<feature type="transmembrane region" description="Helical; Signal-anchor for type II membrane protein" evidence="3">
    <location>
        <begin position="11"/>
        <end position="28"/>
    </location>
</feature>
<feature type="topological domain" description="Lumenal" evidence="3">
    <location>
        <begin position="29"/>
        <end position="342"/>
    </location>
</feature>
<feature type="binding site" evidence="1">
    <location>
        <position position="107"/>
    </location>
    <ligand>
        <name>substrate</name>
    </ligand>
</feature>
<feature type="binding site" evidence="1">
    <location>
        <position position="149"/>
    </location>
    <ligand>
        <name>substrate</name>
    </ligand>
</feature>
<feature type="binding site" evidence="1">
    <location>
        <position position="172"/>
    </location>
    <ligand>
        <name>substrate</name>
    </ligand>
</feature>
<feature type="binding site" evidence="1">
    <location>
        <position position="232"/>
    </location>
    <ligand>
        <name>substrate</name>
    </ligand>
</feature>
<feature type="binding site" evidence="1">
    <location>
        <position position="268"/>
    </location>
    <ligand>
        <name>substrate</name>
    </ligand>
</feature>
<feature type="binding site" evidence="1">
    <location>
        <position position="272"/>
    </location>
    <ligand>
        <name>substrate</name>
    </ligand>
</feature>
<feature type="binding site" evidence="1">
    <location>
        <position position="292"/>
    </location>
    <ligand>
        <name>substrate</name>
    </ligand>
</feature>
<feature type="binding site" evidence="1">
    <location>
        <position position="301"/>
    </location>
    <ligand>
        <name>substrate</name>
    </ligand>
</feature>
<feature type="binding site" evidence="1">
    <location>
        <position position="318"/>
    </location>
    <ligand>
        <name>substrate</name>
    </ligand>
</feature>
<feature type="glycosylation site" description="N-linked (GlcNAc...) asparagine" evidence="3">
    <location>
        <position position="81"/>
    </location>
</feature>
<feature type="glycosylation site" description="N-linked (GlcNAc...) asparagine" evidence="3">
    <location>
        <position position="116"/>
    </location>
</feature>
<feature type="glycosylation site" description="N-linked (GlcNAc...) asparagine" evidence="3">
    <location>
        <position position="203"/>
    </location>
</feature>
<feature type="glycosylation site" description="N-linked (GlcNAc...) asparagine" evidence="3">
    <location>
        <position position="229"/>
    </location>
</feature>
<feature type="glycosylation site" description="N-linked (GlcNAc...) asparagine" evidence="3">
    <location>
        <position position="306"/>
    </location>
</feature>
<feature type="glycosylation site" description="N-linked (GlcNAc...) asparagine" evidence="3">
    <location>
        <position position="325"/>
    </location>
</feature>
<feature type="disulfide bond" evidence="1">
    <location>
        <begin position="61"/>
        <end position="66"/>
    </location>
</feature>
<feature type="disulfide bond" evidence="1">
    <location>
        <begin position="63"/>
        <end position="141"/>
    </location>
</feature>
<feature type="disulfide bond" evidence="1">
    <location>
        <begin position="144"/>
        <end position="283"/>
    </location>
</feature>
<keyword id="KW-1015">Disulfide bond</keyword>
<keyword id="KW-0325">Glycoprotein</keyword>
<keyword id="KW-0328">Glycosyltransferase</keyword>
<keyword id="KW-0333">Golgi apparatus</keyword>
<keyword id="KW-0472">Membrane</keyword>
<keyword id="KW-1185">Reference proteome</keyword>
<keyword id="KW-0964">Secreted</keyword>
<keyword id="KW-0735">Signal-anchor</keyword>
<keyword id="KW-0808">Transferase</keyword>
<keyword id="KW-0812">Transmembrane</keyword>
<keyword id="KW-1133">Transmembrane helix</keyword>
<evidence type="ECO:0000250" key="1"/>
<evidence type="ECO:0000250" key="2">
    <source>
        <dbReference type="UniProtKB" id="P54751"/>
    </source>
</evidence>
<evidence type="ECO:0000255" key="3"/>
<evidence type="ECO:0000305" key="4"/>
<name>SIA4A_CHICK</name>
<accession>Q11200</accession>
<proteinExistence type="evidence at transcript level"/>
<organism>
    <name type="scientific">Gallus gallus</name>
    <name type="common">Chicken</name>
    <dbReference type="NCBI Taxonomy" id="9031"/>
    <lineage>
        <taxon>Eukaryota</taxon>
        <taxon>Metazoa</taxon>
        <taxon>Chordata</taxon>
        <taxon>Craniata</taxon>
        <taxon>Vertebrata</taxon>
        <taxon>Euteleostomi</taxon>
        <taxon>Archelosauria</taxon>
        <taxon>Archosauria</taxon>
        <taxon>Dinosauria</taxon>
        <taxon>Saurischia</taxon>
        <taxon>Theropoda</taxon>
        <taxon>Coelurosauria</taxon>
        <taxon>Aves</taxon>
        <taxon>Neognathae</taxon>
        <taxon>Galloanserae</taxon>
        <taxon>Galliformes</taxon>
        <taxon>Phasianidae</taxon>
        <taxon>Phasianinae</taxon>
        <taxon>Gallus</taxon>
    </lineage>
</organism>
<protein>
    <recommendedName>
        <fullName>CMP-N-acetylneuraminate-beta-galactosamide-alpha-2,3-sialyltransferase 1</fullName>
        <shortName>Alpha 2,3-ST 1</shortName>
        <shortName>Beta-galactoside alpha-2,3-sialyltransferase 1</shortName>
        <ecNumber evidence="2">2.4.3.4</ecNumber>
    </recommendedName>
    <alternativeName>
        <fullName>Gal-NAc6S</fullName>
    </alternativeName>
    <alternativeName>
        <fullName>Gal-beta-1,3-GalNAc-alpha-2,3-sialyltransferase</fullName>
    </alternativeName>
    <alternativeName>
        <fullName>ST3Gal I</fullName>
        <shortName>ST3GalI</shortName>
    </alternativeName>
    <alternativeName>
        <fullName>ST3GalA.1</fullName>
    </alternativeName>
    <alternativeName>
        <fullName>ST3O</fullName>
    </alternativeName>
    <alternativeName>
        <fullName>Sialyltransferase 4A</fullName>
        <shortName>SIAT4-A</shortName>
    </alternativeName>
</protein>
<reference key="1">
    <citation type="journal article" date="1995" name="Biochim. Biophys. Acta">
        <title>Molecular cloning and expression of chick Gal beta 1,3GalNAc alpha 2,3-sialyltransferase.</title>
        <authorList>
            <person name="Kurosawa N."/>
            <person name="Hamamoto T."/>
            <person name="Inoue M."/>
            <person name="Tsuji S."/>
        </authorList>
    </citation>
    <scope>NUCLEOTIDE SEQUENCE [MRNA]</scope>
    <source>
        <tissue>Embryonic brain</tissue>
    </source>
</reference>
<dbReference type="EC" id="2.4.3.4" evidence="2"/>
<dbReference type="EMBL" id="X80503">
    <property type="protein sequence ID" value="CAA56666.1"/>
    <property type="molecule type" value="mRNA"/>
</dbReference>
<dbReference type="PIR" id="S55675">
    <property type="entry name" value="S55675"/>
</dbReference>
<dbReference type="RefSeq" id="NP_990548.1">
    <property type="nucleotide sequence ID" value="NM_205217.1"/>
</dbReference>
<dbReference type="RefSeq" id="XP_015138567.1">
    <property type="nucleotide sequence ID" value="XM_015283081.1"/>
</dbReference>
<dbReference type="RefSeq" id="XP_040532367.1">
    <property type="nucleotide sequence ID" value="XM_040676433.2"/>
</dbReference>
<dbReference type="RefSeq" id="XP_046766385.1">
    <property type="nucleotide sequence ID" value="XM_046910429.1"/>
</dbReference>
<dbReference type="RefSeq" id="XP_046766386.1">
    <property type="nucleotide sequence ID" value="XM_046910430.1"/>
</dbReference>
<dbReference type="RefSeq" id="XP_046766387.1">
    <property type="nucleotide sequence ID" value="XM_046910431.1"/>
</dbReference>
<dbReference type="RefSeq" id="XP_046766388.1">
    <property type="nucleotide sequence ID" value="XM_046910432.1"/>
</dbReference>
<dbReference type="RefSeq" id="XP_046774986.1">
    <property type="nucleotide sequence ID" value="XM_046919030.1"/>
</dbReference>
<dbReference type="RefSeq" id="XP_046774997.1">
    <property type="nucleotide sequence ID" value="XM_046919041.1"/>
</dbReference>
<dbReference type="RefSeq" id="XP_046775005.1">
    <property type="nucleotide sequence ID" value="XM_046919049.1"/>
</dbReference>
<dbReference type="RefSeq" id="XP_046775008.1">
    <property type="nucleotide sequence ID" value="XM_046919052.1"/>
</dbReference>
<dbReference type="SMR" id="Q11200"/>
<dbReference type="FunCoup" id="Q11200">
    <property type="interactions" value="219"/>
</dbReference>
<dbReference type="STRING" id="9031.ENSGALP00000051730"/>
<dbReference type="CAZy" id="GT29">
    <property type="family name" value="Glycosyltransferase Family 29"/>
</dbReference>
<dbReference type="GlyCosmos" id="Q11200">
    <property type="glycosylation" value="6 sites, No reported glycans"/>
</dbReference>
<dbReference type="GlyGen" id="Q11200">
    <property type="glycosylation" value="6 sites"/>
</dbReference>
<dbReference type="PaxDb" id="9031-ENSGALP00000026083"/>
<dbReference type="Ensembl" id="ENSGALT00010023368.1">
    <property type="protein sequence ID" value="ENSGALP00010013501.1"/>
    <property type="gene ID" value="ENSGALG00010009777.1"/>
</dbReference>
<dbReference type="GeneID" id="396140"/>
<dbReference type="KEGG" id="gga:396140"/>
<dbReference type="CTD" id="6482"/>
<dbReference type="VEuPathDB" id="HostDB:geneid_396140"/>
<dbReference type="eggNOG" id="KOG2692">
    <property type="taxonomic scope" value="Eukaryota"/>
</dbReference>
<dbReference type="GeneTree" id="ENSGT00940000154725"/>
<dbReference type="HOGENOM" id="CLU_032020_2_1_1"/>
<dbReference type="InParanoid" id="Q11200"/>
<dbReference type="OMA" id="RPCSCHT"/>
<dbReference type="OrthoDB" id="10264956at2759"/>
<dbReference type="PhylomeDB" id="Q11200"/>
<dbReference type="TreeFam" id="TF354325"/>
<dbReference type="BRENDA" id="2.4.99.2">
    <property type="organism ID" value="1306"/>
</dbReference>
<dbReference type="Reactome" id="R-GGA-2022854">
    <property type="pathway name" value="Keratan sulfate biosynthesis"/>
</dbReference>
<dbReference type="Reactome" id="R-GGA-4085001">
    <property type="pathway name" value="Sialic acid metabolism"/>
</dbReference>
<dbReference type="Reactome" id="R-GGA-977068">
    <property type="pathway name" value="Termination of O-glycan biosynthesis"/>
</dbReference>
<dbReference type="UniPathway" id="UPA00378"/>
<dbReference type="PRO" id="PR:Q11200"/>
<dbReference type="Proteomes" id="UP000000539">
    <property type="component" value="Chromosome 2"/>
</dbReference>
<dbReference type="Bgee" id="ENSGALG00000037773">
    <property type="expression patterns" value="Expressed in muscle tissue and 13 other cell types or tissues"/>
</dbReference>
<dbReference type="GO" id="GO:0005576">
    <property type="term" value="C:extracellular region"/>
    <property type="evidence" value="ECO:0007669"/>
    <property type="project" value="UniProtKB-SubCell"/>
</dbReference>
<dbReference type="GO" id="GO:0032580">
    <property type="term" value="C:Golgi cisterna membrane"/>
    <property type="evidence" value="ECO:0007669"/>
    <property type="project" value="UniProtKB-SubCell"/>
</dbReference>
<dbReference type="GO" id="GO:0016020">
    <property type="term" value="C:membrane"/>
    <property type="evidence" value="ECO:0000318"/>
    <property type="project" value="GO_Central"/>
</dbReference>
<dbReference type="GO" id="GO:0003836">
    <property type="term" value="F:beta-galactoside (CMP) alpha-2,3-sialyltransferase activity"/>
    <property type="evidence" value="ECO:0000250"/>
    <property type="project" value="UniProtKB"/>
</dbReference>
<dbReference type="GO" id="GO:0010706">
    <property type="term" value="P:ganglioside biosynthetic process via lactosylceramide"/>
    <property type="evidence" value="ECO:0000318"/>
    <property type="project" value="GO_Central"/>
</dbReference>
<dbReference type="GO" id="GO:0006054">
    <property type="term" value="P:N-acetylneuraminate metabolic process"/>
    <property type="evidence" value="ECO:0000250"/>
    <property type="project" value="UniProtKB"/>
</dbReference>
<dbReference type="GO" id="GO:0006486">
    <property type="term" value="P:protein glycosylation"/>
    <property type="evidence" value="ECO:0000318"/>
    <property type="project" value="GO_Central"/>
</dbReference>
<dbReference type="GO" id="GO:0006487">
    <property type="term" value="P:protein N-linked glycosylation"/>
    <property type="evidence" value="ECO:0000250"/>
    <property type="project" value="UniProtKB"/>
</dbReference>
<dbReference type="GO" id="GO:0097503">
    <property type="term" value="P:sialylation"/>
    <property type="evidence" value="ECO:0000250"/>
    <property type="project" value="UniProtKB"/>
</dbReference>
<dbReference type="CDD" id="cd23980">
    <property type="entry name" value="GT29_ST3GAL1"/>
    <property type="match status" value="1"/>
</dbReference>
<dbReference type="FunFam" id="3.90.1480.20:FF:000034">
    <property type="entry name" value="CMP-N-acetylneuraminate-beta-galactosamide-alpha-2,3-sialyltransferase 1"/>
    <property type="match status" value="1"/>
</dbReference>
<dbReference type="Gene3D" id="3.90.1480.20">
    <property type="entry name" value="Glycosyl transferase family 29"/>
    <property type="match status" value="1"/>
</dbReference>
<dbReference type="InterPro" id="IPR051757">
    <property type="entry name" value="Beta-gal_alpha2-3_sialyltrans"/>
</dbReference>
<dbReference type="InterPro" id="IPR001675">
    <property type="entry name" value="Glyco_trans_29"/>
</dbReference>
<dbReference type="InterPro" id="IPR038578">
    <property type="entry name" value="GT29-like_sf"/>
</dbReference>
<dbReference type="InterPro" id="IPR012163">
    <property type="entry name" value="Sialyl_trans"/>
</dbReference>
<dbReference type="PANTHER" id="PTHR46032">
    <property type="entry name" value="ALPHA-2,3-SIALYLTRANSFERASE ST3GAL I ISOFORM X1"/>
    <property type="match status" value="1"/>
</dbReference>
<dbReference type="PANTHER" id="PTHR46032:SF6">
    <property type="entry name" value="CMP-N-ACETYLNEURAMINATE-BETA-GALACTOSAMIDE-ALPHA-2,3-SIALYLTRANSFERASE 1"/>
    <property type="match status" value="1"/>
</dbReference>
<dbReference type="Pfam" id="PF00777">
    <property type="entry name" value="Glyco_transf_29"/>
    <property type="match status" value="1"/>
</dbReference>
<dbReference type="PIRSF" id="PIRSF005557">
    <property type="entry name" value="Sialyl_trans"/>
    <property type="match status" value="1"/>
</dbReference>
<comment type="function">
    <text evidence="2">Responsible for the synthesis of the sequence NeuAc-alpha-2,3-Gal-beta-1,3-GalNAc- found on sugar chains O-linked to Thr or Ser and also as a terminal sequence on certain gangliosides. SIAT4A and SIAT4B sialylate the same acceptor substrates but exhibit different Km values.</text>
</comment>
<comment type="catalytic activity">
    <reaction evidence="2">
        <text>a beta-D-galactosyl-(1-&gt;3)-N-acetyl-alpha-D-galactosaminyl derivative + CMP-N-acetyl-beta-neuraminate = an N-acetyl-alpha-neuraminyl-(2-&gt;3)-beta-D-galactosyl-(1-&gt;3)-N-acetyl-alpha-D-galactosaminyl derivative + CMP + H(+)</text>
        <dbReference type="Rhea" id="RHEA:21616"/>
        <dbReference type="ChEBI" id="CHEBI:15378"/>
        <dbReference type="ChEBI" id="CHEBI:57812"/>
        <dbReference type="ChEBI" id="CHEBI:60377"/>
        <dbReference type="ChEBI" id="CHEBI:133470"/>
        <dbReference type="ChEBI" id="CHEBI:139596"/>
        <dbReference type="EC" id="2.4.3.4"/>
    </reaction>
</comment>
<comment type="pathway">
    <text>Protein modification; protein glycosylation.</text>
</comment>
<comment type="subcellular location">
    <subcellularLocation>
        <location>Golgi apparatus</location>
        <location>Golgi stack membrane</location>
        <topology>Single-pass type II membrane protein</topology>
    </subcellularLocation>
    <subcellularLocation>
        <location>Secreted</location>
    </subcellularLocation>
    <text>Membrane-bound form in trans cisternae of Golgi. Secreted into the body fluid.</text>
</comment>
<comment type="developmental stage">
    <text>Expressed in early embryonic stages.</text>
</comment>
<comment type="PTM">
    <text>The soluble form derives from the membrane form by proteolytic processing.</text>
</comment>
<comment type="similarity">
    <text evidence="4">Belongs to the glycosyltransferase 29 family.</text>
</comment>
<sequence length="342" mass="39540">MVTVRKRNVKVFTFAFVLITVTSFLLNYKHQVTMTTWDPKHIISQFSEQVRKLIKFPRRPCSCSTCISELGHSLWFDQRFNSTMQPFLTSQNALIPEDSYRWWLKLQGEKSPKNINDTLKELFGIIPGDRDPLQERGTFSCRRCAVVGNSGNLRQSQYGQDIDSHDFVLRMNRAPTIGYESDVGSKTTHHFVYPESYKELAENVSMIVIPFKTLDLRWIVTALTTGTINFTYVPVPRKIKVRKEKVLIYNPSFIKYVYENWLQNHGRYPSTGLLSVIFALHVCDEVNVYGFGADSKGHWHHYWENNASAGAFRQTGVHDGDFEFNVTLTLASIEKIKFFKGR</sequence>
<gene>
    <name type="primary">ST3GAL1</name>
    <name type="synonym">SIAT4A</name>
</gene>